<accession>B0BVI6</accession>
<organism>
    <name type="scientific">Rickettsia rickettsii (strain Iowa)</name>
    <dbReference type="NCBI Taxonomy" id="452659"/>
    <lineage>
        <taxon>Bacteria</taxon>
        <taxon>Pseudomonadati</taxon>
        <taxon>Pseudomonadota</taxon>
        <taxon>Alphaproteobacteria</taxon>
        <taxon>Rickettsiales</taxon>
        <taxon>Rickettsiaceae</taxon>
        <taxon>Rickettsieae</taxon>
        <taxon>Rickettsia</taxon>
        <taxon>spotted fever group</taxon>
    </lineage>
</organism>
<proteinExistence type="inferred from homology"/>
<feature type="chain" id="PRO_1000081522" description="Chaperone protein HtpG">
    <location>
        <begin position="1"/>
        <end position="621"/>
    </location>
</feature>
<feature type="region of interest" description="A; substrate-binding" evidence="1">
    <location>
        <begin position="1"/>
        <end position="328"/>
    </location>
</feature>
<feature type="region of interest" description="B" evidence="1">
    <location>
        <begin position="329"/>
        <end position="544"/>
    </location>
</feature>
<feature type="region of interest" description="Disordered" evidence="2">
    <location>
        <begin position="475"/>
        <end position="494"/>
    </location>
</feature>
<feature type="region of interest" description="C" evidence="1">
    <location>
        <begin position="545"/>
        <end position="621"/>
    </location>
</feature>
<keyword id="KW-0067">ATP-binding</keyword>
<keyword id="KW-0143">Chaperone</keyword>
<keyword id="KW-0963">Cytoplasm</keyword>
<keyword id="KW-0547">Nucleotide-binding</keyword>
<keyword id="KW-0346">Stress response</keyword>
<dbReference type="EMBL" id="CP000766">
    <property type="protein sequence ID" value="ABY73246.1"/>
    <property type="molecule type" value="Genomic_DNA"/>
</dbReference>
<dbReference type="RefSeq" id="WP_012151409.1">
    <property type="nucleotide sequence ID" value="NC_010263.3"/>
</dbReference>
<dbReference type="SMR" id="B0BVI6"/>
<dbReference type="GeneID" id="79937902"/>
<dbReference type="KEGG" id="rrj:RrIowa_1527"/>
<dbReference type="eggNOG" id="COG0326">
    <property type="taxonomic scope" value="Bacteria"/>
</dbReference>
<dbReference type="HOGENOM" id="CLU_006684_3_0_5"/>
<dbReference type="Proteomes" id="UP000000796">
    <property type="component" value="Chromosome"/>
</dbReference>
<dbReference type="GO" id="GO:0005737">
    <property type="term" value="C:cytoplasm"/>
    <property type="evidence" value="ECO:0007669"/>
    <property type="project" value="UniProtKB-SubCell"/>
</dbReference>
<dbReference type="GO" id="GO:0005524">
    <property type="term" value="F:ATP binding"/>
    <property type="evidence" value="ECO:0007669"/>
    <property type="project" value="UniProtKB-UniRule"/>
</dbReference>
<dbReference type="GO" id="GO:0016887">
    <property type="term" value="F:ATP hydrolysis activity"/>
    <property type="evidence" value="ECO:0007669"/>
    <property type="project" value="InterPro"/>
</dbReference>
<dbReference type="GO" id="GO:0140662">
    <property type="term" value="F:ATP-dependent protein folding chaperone"/>
    <property type="evidence" value="ECO:0007669"/>
    <property type="project" value="InterPro"/>
</dbReference>
<dbReference type="GO" id="GO:0051082">
    <property type="term" value="F:unfolded protein binding"/>
    <property type="evidence" value="ECO:0007669"/>
    <property type="project" value="UniProtKB-UniRule"/>
</dbReference>
<dbReference type="CDD" id="cd16927">
    <property type="entry name" value="HATPase_Hsp90-like"/>
    <property type="match status" value="1"/>
</dbReference>
<dbReference type="FunFam" id="3.30.565.10:FF:000009">
    <property type="entry name" value="Molecular chaperone HtpG"/>
    <property type="match status" value="1"/>
</dbReference>
<dbReference type="Gene3D" id="3.30.230.80">
    <property type="match status" value="1"/>
</dbReference>
<dbReference type="Gene3D" id="3.40.50.11260">
    <property type="match status" value="1"/>
</dbReference>
<dbReference type="Gene3D" id="1.20.120.790">
    <property type="entry name" value="Heat shock protein 90, C-terminal domain"/>
    <property type="match status" value="1"/>
</dbReference>
<dbReference type="Gene3D" id="3.30.565.10">
    <property type="entry name" value="Histidine kinase-like ATPase, C-terminal domain"/>
    <property type="match status" value="1"/>
</dbReference>
<dbReference type="HAMAP" id="MF_00505">
    <property type="entry name" value="HSP90"/>
    <property type="match status" value="1"/>
</dbReference>
<dbReference type="InterPro" id="IPR036890">
    <property type="entry name" value="HATPase_C_sf"/>
</dbReference>
<dbReference type="InterPro" id="IPR019805">
    <property type="entry name" value="Heat_shock_protein_90_CS"/>
</dbReference>
<dbReference type="InterPro" id="IPR037196">
    <property type="entry name" value="HSP90_C"/>
</dbReference>
<dbReference type="InterPro" id="IPR001404">
    <property type="entry name" value="Hsp90_fam"/>
</dbReference>
<dbReference type="InterPro" id="IPR020575">
    <property type="entry name" value="Hsp90_N"/>
</dbReference>
<dbReference type="InterPro" id="IPR020568">
    <property type="entry name" value="Ribosomal_Su5_D2-typ_SF"/>
</dbReference>
<dbReference type="NCBIfam" id="NF003555">
    <property type="entry name" value="PRK05218.1"/>
    <property type="match status" value="1"/>
</dbReference>
<dbReference type="PANTHER" id="PTHR11528">
    <property type="entry name" value="HEAT SHOCK PROTEIN 90 FAMILY MEMBER"/>
    <property type="match status" value="1"/>
</dbReference>
<dbReference type="Pfam" id="PF13589">
    <property type="entry name" value="HATPase_c_3"/>
    <property type="match status" value="1"/>
</dbReference>
<dbReference type="Pfam" id="PF00183">
    <property type="entry name" value="HSP90"/>
    <property type="match status" value="1"/>
</dbReference>
<dbReference type="PIRSF" id="PIRSF002583">
    <property type="entry name" value="Hsp90"/>
    <property type="match status" value="1"/>
</dbReference>
<dbReference type="PRINTS" id="PR00775">
    <property type="entry name" value="HEATSHOCK90"/>
</dbReference>
<dbReference type="SMART" id="SM00387">
    <property type="entry name" value="HATPase_c"/>
    <property type="match status" value="1"/>
</dbReference>
<dbReference type="SUPFAM" id="SSF55874">
    <property type="entry name" value="ATPase domain of HSP90 chaperone/DNA topoisomerase II/histidine kinase"/>
    <property type="match status" value="1"/>
</dbReference>
<dbReference type="SUPFAM" id="SSF110942">
    <property type="entry name" value="HSP90 C-terminal domain"/>
    <property type="match status" value="1"/>
</dbReference>
<dbReference type="SUPFAM" id="SSF54211">
    <property type="entry name" value="Ribosomal protein S5 domain 2-like"/>
    <property type="match status" value="1"/>
</dbReference>
<dbReference type="PROSITE" id="PS00298">
    <property type="entry name" value="HSP90"/>
    <property type="match status" value="1"/>
</dbReference>
<evidence type="ECO:0000255" key="1">
    <source>
        <dbReference type="HAMAP-Rule" id="MF_00505"/>
    </source>
</evidence>
<evidence type="ECO:0000256" key="2">
    <source>
        <dbReference type="SAM" id="MobiDB-lite"/>
    </source>
</evidence>
<sequence length="621" mass="70666">MIQEKKKFDAEVGKILNLMIHSLYSNKEIFMRELISNASDACDKLRYLSQSNSELVAGDSNFKITVKVDKDNGQIIIRDNGIGMNKDDLIENLGTIARSGTANFLKSLSGDSKKDNMLIGQFGVGFYSSFMVADKVTVTSRKAGEDKVHIWESDGLGEYTVSDSDKEFTRGTEIILHIKKEEDTFLDHFRLKHIVKSYSDHIAVPIYFFDEAGNNEIQLNSASALWTRPKSEITEEQYKEFYKSLSYAIDDPWITMHNKNEGAIEFTNLLFIPSSKTFDLFHPDRKRRVKLYIKRVFISDENIDLIPSYLRFLRGVVDSEDLPLNISRESLQHNSVLEKIKNAITKRVLGELRKKKEESPEEYNKFWANFGGALKEGLCEATTNHEKLLEVCIFRSALHNKMISLDEYIANFKEGQSTIYYLSGDNPDKLLSSPQIEGLLSKKIDVLLFTDTVDDFWVNVNSKYKEHAIKSATRSDIDVEQTTSQSEAKNTDSKKSDDEYKLLTDYFKETLGELVKEVKISKKLTSSPACLAVSDAAMDIRMERFLIEQKQIANASAKNLELNPKNKIIEKIFNDLKANNKNNEELVNLIFDQACILEGEPVADTGAFSKRLNDIVQKAIL</sequence>
<gene>
    <name evidence="1" type="primary">htpG</name>
    <name type="ordered locus">RrIowa_1527</name>
</gene>
<reference key="1">
    <citation type="journal article" date="2008" name="Infect. Immun.">
        <title>Genomic comparison of virulent Rickettsia rickettsii Sheila Smith and avirulent Rickettsia rickettsii Iowa.</title>
        <authorList>
            <person name="Ellison D.W."/>
            <person name="Clark T.R."/>
            <person name="Sturdevant D.E."/>
            <person name="Virtaneva K."/>
            <person name="Porcella S.F."/>
            <person name="Hackstadt T."/>
        </authorList>
    </citation>
    <scope>NUCLEOTIDE SEQUENCE [LARGE SCALE GENOMIC DNA]</scope>
    <source>
        <strain>Iowa</strain>
    </source>
</reference>
<name>HTPG_RICRO</name>
<comment type="function">
    <text evidence="1">Molecular chaperone. Has ATPase activity.</text>
</comment>
<comment type="subunit">
    <text evidence="1">Homodimer.</text>
</comment>
<comment type="subcellular location">
    <subcellularLocation>
        <location evidence="1">Cytoplasm</location>
    </subcellularLocation>
</comment>
<comment type="similarity">
    <text evidence="1">Belongs to the heat shock protein 90 family.</text>
</comment>
<protein>
    <recommendedName>
        <fullName evidence="1">Chaperone protein HtpG</fullName>
    </recommendedName>
    <alternativeName>
        <fullName evidence="1">Heat shock protein HtpG</fullName>
    </alternativeName>
    <alternativeName>
        <fullName evidence="1">High temperature protein G</fullName>
    </alternativeName>
</protein>